<protein>
    <recommendedName>
        <fullName evidence="1">Ribonuclease P protein component</fullName>
        <shortName evidence="1">RNase P protein</shortName>
        <shortName evidence="1">RNaseP protein</shortName>
        <ecNumber evidence="1">3.1.26.5</ecNumber>
    </recommendedName>
    <alternativeName>
        <fullName evidence="1">Protein C5</fullName>
    </alternativeName>
</protein>
<sequence>MRRANRLRRPAQFRRVRQTGRTFSSAWLTLTVAPGRRDGVRCGFITGRRLGKAVQRNRARRRVREAVRLLLPSLTTGYDLLFAIRSPEVIEAPFSQLQADIIRLLRQACLLTTPETEPVSPVSPTSLPQNERGSP</sequence>
<gene>
    <name evidence="1" type="primary">rnpA</name>
    <name type="ordered locus">Cagg_1195</name>
</gene>
<comment type="function">
    <text evidence="1">RNaseP catalyzes the removal of the 5'-leader sequence from pre-tRNA to produce the mature 5'-terminus. It can also cleave other RNA substrates such as 4.5S RNA. The protein component plays an auxiliary but essential role in vivo by binding to the 5'-leader sequence and broadening the substrate specificity of the ribozyme.</text>
</comment>
<comment type="catalytic activity">
    <reaction evidence="1">
        <text>Endonucleolytic cleavage of RNA, removing 5'-extranucleotides from tRNA precursor.</text>
        <dbReference type="EC" id="3.1.26.5"/>
    </reaction>
</comment>
<comment type="subunit">
    <text evidence="1">Consists of a catalytic RNA component (M1 or rnpB) and a protein subunit.</text>
</comment>
<comment type="similarity">
    <text evidence="1">Belongs to the RnpA family.</text>
</comment>
<reference key="1">
    <citation type="submission" date="2008-12" db="EMBL/GenBank/DDBJ databases">
        <title>Complete sequence of Chloroflexus aggregans DSM 9485.</title>
        <authorList>
            <consortium name="US DOE Joint Genome Institute"/>
            <person name="Lucas S."/>
            <person name="Copeland A."/>
            <person name="Lapidus A."/>
            <person name="Glavina del Rio T."/>
            <person name="Dalin E."/>
            <person name="Tice H."/>
            <person name="Pitluck S."/>
            <person name="Foster B."/>
            <person name="Larimer F."/>
            <person name="Land M."/>
            <person name="Hauser L."/>
            <person name="Kyrpides N."/>
            <person name="Mikhailova N."/>
            <person name="Bryant D.A."/>
            <person name="Richardson P."/>
        </authorList>
    </citation>
    <scope>NUCLEOTIDE SEQUENCE [LARGE SCALE GENOMIC DNA]</scope>
    <source>
        <strain>MD-66 / DSM 9485</strain>
    </source>
</reference>
<accession>B8G7S5</accession>
<name>RNPA_CHLAD</name>
<proteinExistence type="inferred from homology"/>
<feature type="chain" id="PRO_1000194621" description="Ribonuclease P protein component">
    <location>
        <begin position="1"/>
        <end position="135"/>
    </location>
</feature>
<feature type="region of interest" description="Disordered" evidence="2">
    <location>
        <begin position="115"/>
        <end position="135"/>
    </location>
</feature>
<feature type="compositionally biased region" description="Polar residues" evidence="2">
    <location>
        <begin position="122"/>
        <end position="135"/>
    </location>
</feature>
<organism>
    <name type="scientific">Chloroflexus aggregans (strain MD-66 / DSM 9485)</name>
    <dbReference type="NCBI Taxonomy" id="326427"/>
    <lineage>
        <taxon>Bacteria</taxon>
        <taxon>Bacillati</taxon>
        <taxon>Chloroflexota</taxon>
        <taxon>Chloroflexia</taxon>
        <taxon>Chloroflexales</taxon>
        <taxon>Chloroflexineae</taxon>
        <taxon>Chloroflexaceae</taxon>
        <taxon>Chloroflexus</taxon>
    </lineage>
</organism>
<keyword id="KW-0255">Endonuclease</keyword>
<keyword id="KW-0378">Hydrolase</keyword>
<keyword id="KW-0540">Nuclease</keyword>
<keyword id="KW-0694">RNA-binding</keyword>
<keyword id="KW-0819">tRNA processing</keyword>
<evidence type="ECO:0000255" key="1">
    <source>
        <dbReference type="HAMAP-Rule" id="MF_00227"/>
    </source>
</evidence>
<evidence type="ECO:0000256" key="2">
    <source>
        <dbReference type="SAM" id="MobiDB-lite"/>
    </source>
</evidence>
<dbReference type="EC" id="3.1.26.5" evidence="1"/>
<dbReference type="EMBL" id="CP001337">
    <property type="protein sequence ID" value="ACL24104.1"/>
    <property type="molecule type" value="Genomic_DNA"/>
</dbReference>
<dbReference type="RefSeq" id="WP_012616468.1">
    <property type="nucleotide sequence ID" value="NC_011831.1"/>
</dbReference>
<dbReference type="SMR" id="B8G7S5"/>
<dbReference type="STRING" id="326427.Cagg_1195"/>
<dbReference type="KEGG" id="cag:Cagg_1195"/>
<dbReference type="eggNOG" id="COG0594">
    <property type="taxonomic scope" value="Bacteria"/>
</dbReference>
<dbReference type="HOGENOM" id="CLU_117179_9_0_0"/>
<dbReference type="OrthoDB" id="166028at2"/>
<dbReference type="Proteomes" id="UP000002508">
    <property type="component" value="Chromosome"/>
</dbReference>
<dbReference type="GO" id="GO:0030677">
    <property type="term" value="C:ribonuclease P complex"/>
    <property type="evidence" value="ECO:0007669"/>
    <property type="project" value="TreeGrafter"/>
</dbReference>
<dbReference type="GO" id="GO:0042781">
    <property type="term" value="F:3'-tRNA processing endoribonuclease activity"/>
    <property type="evidence" value="ECO:0007669"/>
    <property type="project" value="TreeGrafter"/>
</dbReference>
<dbReference type="GO" id="GO:0004526">
    <property type="term" value="F:ribonuclease P activity"/>
    <property type="evidence" value="ECO:0007669"/>
    <property type="project" value="UniProtKB-UniRule"/>
</dbReference>
<dbReference type="GO" id="GO:0000049">
    <property type="term" value="F:tRNA binding"/>
    <property type="evidence" value="ECO:0007669"/>
    <property type="project" value="UniProtKB-UniRule"/>
</dbReference>
<dbReference type="GO" id="GO:0001682">
    <property type="term" value="P:tRNA 5'-leader removal"/>
    <property type="evidence" value="ECO:0007669"/>
    <property type="project" value="UniProtKB-UniRule"/>
</dbReference>
<dbReference type="Gene3D" id="3.30.230.10">
    <property type="match status" value="1"/>
</dbReference>
<dbReference type="HAMAP" id="MF_00227">
    <property type="entry name" value="RNase_P"/>
    <property type="match status" value="1"/>
</dbReference>
<dbReference type="InterPro" id="IPR020568">
    <property type="entry name" value="Ribosomal_Su5_D2-typ_SF"/>
</dbReference>
<dbReference type="InterPro" id="IPR014721">
    <property type="entry name" value="Ribsml_uS5_D2-typ_fold_subgr"/>
</dbReference>
<dbReference type="InterPro" id="IPR000100">
    <property type="entry name" value="RNase_P"/>
</dbReference>
<dbReference type="InterPro" id="IPR020539">
    <property type="entry name" value="RNase_P_CS"/>
</dbReference>
<dbReference type="NCBIfam" id="TIGR00188">
    <property type="entry name" value="rnpA"/>
    <property type="match status" value="1"/>
</dbReference>
<dbReference type="PANTHER" id="PTHR33992">
    <property type="entry name" value="RIBONUCLEASE P PROTEIN COMPONENT"/>
    <property type="match status" value="1"/>
</dbReference>
<dbReference type="PANTHER" id="PTHR33992:SF1">
    <property type="entry name" value="RIBONUCLEASE P PROTEIN COMPONENT"/>
    <property type="match status" value="1"/>
</dbReference>
<dbReference type="Pfam" id="PF00825">
    <property type="entry name" value="Ribonuclease_P"/>
    <property type="match status" value="1"/>
</dbReference>
<dbReference type="SUPFAM" id="SSF54211">
    <property type="entry name" value="Ribosomal protein S5 domain 2-like"/>
    <property type="match status" value="1"/>
</dbReference>
<dbReference type="PROSITE" id="PS00648">
    <property type="entry name" value="RIBONUCLEASE_P"/>
    <property type="match status" value="1"/>
</dbReference>